<proteinExistence type="inferred from homology"/>
<accession>D5DKA5</accession>
<reference key="1">
    <citation type="journal article" date="2011" name="J. Bacteriol.">
        <title>Genome sequences of the biotechnologically important Bacillus megaterium strains QM B1551 and DSM319.</title>
        <authorList>
            <person name="Eppinger M."/>
            <person name="Bunk B."/>
            <person name="Johns M.A."/>
            <person name="Edirisinghe J.N."/>
            <person name="Kutumbaka K.K."/>
            <person name="Koenig S.S."/>
            <person name="Creasy H.H."/>
            <person name="Rosovitz M.J."/>
            <person name="Riley D.R."/>
            <person name="Daugherty S."/>
            <person name="Martin M."/>
            <person name="Elbourne L.D."/>
            <person name="Paulsen I."/>
            <person name="Biedendieck R."/>
            <person name="Braun C."/>
            <person name="Grayburn S."/>
            <person name="Dhingra S."/>
            <person name="Lukyanchuk V."/>
            <person name="Ball B."/>
            <person name="Ul-Qamar R."/>
            <person name="Seibel J."/>
            <person name="Bremer E."/>
            <person name="Jahn D."/>
            <person name="Ravel J."/>
            <person name="Vary P.S."/>
        </authorList>
    </citation>
    <scope>NUCLEOTIDE SEQUENCE [LARGE SCALE GENOMIC DNA]</scope>
    <source>
        <strain>DSM 319 / IMG 1521</strain>
    </source>
</reference>
<dbReference type="EC" id="2.3.1.222"/>
<dbReference type="EMBL" id="CP001982">
    <property type="protein sequence ID" value="ADF40493.1"/>
    <property type="molecule type" value="Genomic_DNA"/>
</dbReference>
<dbReference type="RefSeq" id="WP_013084352.1">
    <property type="nucleotide sequence ID" value="NC_014103.1"/>
</dbReference>
<dbReference type="SMR" id="D5DKA5"/>
<dbReference type="KEGG" id="bmd:BMD_3660"/>
<dbReference type="PATRIC" id="fig|592022.4.peg.3641"/>
<dbReference type="HOGENOM" id="CLU_080676_1_0_9"/>
<dbReference type="UniPathway" id="UPA00621"/>
<dbReference type="Proteomes" id="UP000002365">
    <property type="component" value="Chromosome"/>
</dbReference>
<dbReference type="GO" id="GO:0031469">
    <property type="term" value="C:bacterial microcompartment"/>
    <property type="evidence" value="ECO:0007669"/>
    <property type="project" value="UniProtKB-SubCell"/>
</dbReference>
<dbReference type="GO" id="GO:0016747">
    <property type="term" value="F:acyltransferase activity, transferring groups other than amino-acyl groups"/>
    <property type="evidence" value="ECO:0007669"/>
    <property type="project" value="InterPro"/>
</dbReference>
<dbReference type="GO" id="GO:0046872">
    <property type="term" value="F:metal ion binding"/>
    <property type="evidence" value="ECO:0007669"/>
    <property type="project" value="UniProtKB-KW"/>
</dbReference>
<dbReference type="GO" id="GO:0051144">
    <property type="term" value="P:propanediol catabolic process"/>
    <property type="evidence" value="ECO:0007669"/>
    <property type="project" value="UniProtKB-UniPathway"/>
</dbReference>
<dbReference type="InterPro" id="IPR009010">
    <property type="entry name" value="Asp_de-COase-like_dom_sf"/>
</dbReference>
<dbReference type="InterPro" id="IPR008300">
    <property type="entry name" value="PTAC"/>
</dbReference>
<dbReference type="NCBIfam" id="NF011652">
    <property type="entry name" value="PRK15070.1"/>
    <property type="match status" value="1"/>
</dbReference>
<dbReference type="PANTHER" id="PTHR39453">
    <property type="entry name" value="PHOSPHATE PROPANOYLTRANSFERASE"/>
    <property type="match status" value="1"/>
</dbReference>
<dbReference type="PANTHER" id="PTHR39453:SF1">
    <property type="entry name" value="PHOSPHATE PROPANOYLTRANSFERASE"/>
    <property type="match status" value="1"/>
</dbReference>
<dbReference type="Pfam" id="PF06130">
    <property type="entry name" value="PTAC"/>
    <property type="match status" value="1"/>
</dbReference>
<dbReference type="PIRSF" id="PIRSF010130">
    <property type="entry name" value="PduL"/>
    <property type="match status" value="1"/>
</dbReference>
<dbReference type="SUPFAM" id="SSF50692">
    <property type="entry name" value="ADC-like"/>
    <property type="match status" value="1"/>
</dbReference>
<feature type="chain" id="PRO_0000407707" description="Phosphate propanoyltransferase">
    <location>
        <begin position="1"/>
        <end position="217"/>
    </location>
</feature>
<feature type="binding site" evidence="1">
    <location>
        <begin position="31"/>
        <end position="33"/>
    </location>
    <ligand>
        <name>CoA</name>
        <dbReference type="ChEBI" id="CHEBI:57287"/>
    </ligand>
</feature>
<feature type="binding site" evidence="1">
    <location>
        <position position="35"/>
    </location>
    <ligand>
        <name>Zn(2+)</name>
        <dbReference type="ChEBI" id="CHEBI:29105"/>
        <label>1</label>
    </ligand>
</feature>
<feature type="binding site" evidence="1">
    <location>
        <position position="37"/>
    </location>
    <ligand>
        <name>Zn(2+)</name>
        <dbReference type="ChEBI" id="CHEBI:29105"/>
        <label>1</label>
    </ligand>
</feature>
<feature type="binding site" evidence="1">
    <location>
        <position position="77"/>
    </location>
    <ligand>
        <name>CoA</name>
        <dbReference type="ChEBI" id="CHEBI:57287"/>
    </ligand>
</feature>
<feature type="binding site" evidence="1">
    <location>
        <position position="84"/>
    </location>
    <ligand>
        <name>CoA</name>
        <dbReference type="ChEBI" id="CHEBI:57287"/>
    </ligand>
</feature>
<feature type="binding site" evidence="1">
    <location>
        <position position="90"/>
    </location>
    <ligand>
        <name>phosphate</name>
        <dbReference type="ChEBI" id="CHEBI:43474"/>
    </ligand>
</feature>
<feature type="binding site" evidence="1">
    <location>
        <position position="96"/>
    </location>
    <ligand>
        <name>Zn(2+)</name>
        <dbReference type="ChEBI" id="CHEBI:29105"/>
        <label>1</label>
    </ligand>
</feature>
<feature type="binding site" evidence="1">
    <location>
        <position position="144"/>
    </location>
    <ligand>
        <name>Zn(2+)</name>
        <dbReference type="ChEBI" id="CHEBI:29105"/>
        <label>2</label>
    </ligand>
</feature>
<feature type="binding site" evidence="1">
    <location>
        <position position="146"/>
    </location>
    <ligand>
        <name>Zn(2+)</name>
        <dbReference type="ChEBI" id="CHEBI:29105"/>
        <label>2</label>
    </ligand>
</feature>
<feature type="binding site" evidence="1">
    <location>
        <position position="191"/>
    </location>
    <ligand>
        <name>Zn(2+)</name>
        <dbReference type="ChEBI" id="CHEBI:29105"/>
        <label>2</label>
    </ligand>
</feature>
<feature type="binding site" evidence="1">
    <location>
        <position position="198"/>
    </location>
    <ligand>
        <name>CoA</name>
        <dbReference type="ChEBI" id="CHEBI:57287"/>
    </ligand>
</feature>
<gene>
    <name type="primary">pduL</name>
    <name type="ordered locus">BMD_3660</name>
</gene>
<comment type="function">
    <text evidence="2">Involved in 1,2-propanediol (1,2-PD) utilization within the bacterial microcompartment (BMC) dedicated to 1,2-PD degradation by catalyzing the conversion of propanoyl-CoA to propanoyl-phosphate.</text>
</comment>
<comment type="catalytic activity">
    <reaction evidence="2">
        <text>propanoyl-CoA + phosphate = propanoyl phosphate + CoA</text>
        <dbReference type="Rhea" id="RHEA:28046"/>
        <dbReference type="ChEBI" id="CHEBI:43474"/>
        <dbReference type="ChEBI" id="CHEBI:57287"/>
        <dbReference type="ChEBI" id="CHEBI:57392"/>
        <dbReference type="ChEBI" id="CHEBI:58933"/>
        <dbReference type="EC" id="2.3.1.222"/>
    </reaction>
</comment>
<comment type="cofactor">
    <cofactor evidence="1">
        <name>Zn(2+)</name>
        <dbReference type="ChEBI" id="CHEBI:29105"/>
    </cofactor>
    <text evidence="1">There are 2 Zn(2+) ions per monomer; Zn(2+) and CoA bind inbetween the 2 domains in each monomer.</text>
</comment>
<comment type="pathway">
    <text>Polyol metabolism; 1,2-propanediol degradation.</text>
</comment>
<comment type="subcellular location">
    <subcellularLocation>
        <location evidence="2">Bacterial microcompartment</location>
    </subcellularLocation>
</comment>
<comment type="domain">
    <text evidence="1">Formed by 2 beta-barrels, each is capped on both ends by short alpha-helices.</text>
</comment>
<comment type="similarity">
    <text evidence="3">Belongs to the PduL family.</text>
</comment>
<protein>
    <recommendedName>
        <fullName>Phosphate propanoyltransferase</fullName>
        <ecNumber>2.3.1.222</ecNumber>
    </recommendedName>
    <alternativeName>
        <fullName>Phosphate acyltransferase PduL</fullName>
    </alternativeName>
    <alternativeName>
        <fullName>Phosphotransacylase PduL</fullName>
        <shortName>PTAC</shortName>
    </alternativeName>
    <alternativeName>
        <fullName>Propanediol utilization protein PduL</fullName>
    </alternativeName>
</protein>
<keyword id="KW-0012">Acyltransferase</keyword>
<keyword id="KW-1283">Bacterial microcompartment</keyword>
<keyword id="KW-0479">Metal-binding</keyword>
<keyword id="KW-0808">Transferase</keyword>
<keyword id="KW-0862">Zinc</keyword>
<sequence>MNKQAIQSIVAEVVQQLSQTTKQSNTVPMAVSARHCHLSIEDVEALFGAGYELTKKSDLSQPGQFAANETVTIVGPKGSIEKVRVLGPARSITQVEVSKTDSIKLGAVPPLRESGDIKNSEAITLVGPKGSIYKKEGLIIARAHIHMTPDDAEAYGVKNGQCVRITSQGERPTTLERVLIRVSPKFKLEMHIDTDEANAGLISTGDTGILSLYEEAL</sequence>
<organism>
    <name type="scientific">Priestia megaterium (strain DSM 319 / IMG 1521)</name>
    <name type="common">Bacillus megaterium</name>
    <dbReference type="NCBI Taxonomy" id="592022"/>
    <lineage>
        <taxon>Bacteria</taxon>
        <taxon>Bacillati</taxon>
        <taxon>Bacillota</taxon>
        <taxon>Bacilli</taxon>
        <taxon>Bacillales</taxon>
        <taxon>Bacillaceae</taxon>
        <taxon>Priestia</taxon>
    </lineage>
</organism>
<name>PDUL_PRIM3</name>
<evidence type="ECO:0000250" key="1">
    <source>
        <dbReference type="UniProtKB" id="Q21A54"/>
    </source>
</evidence>
<evidence type="ECO:0000250" key="2">
    <source>
        <dbReference type="UniProtKB" id="Q9XDN5"/>
    </source>
</evidence>
<evidence type="ECO:0000305" key="3"/>